<keyword id="KW-0029">Amino-acid transport</keyword>
<keyword id="KW-1003">Cell membrane</keyword>
<keyword id="KW-0472">Membrane</keyword>
<keyword id="KW-0812">Transmembrane</keyword>
<keyword id="KW-1133">Transmembrane helix</keyword>
<keyword id="KW-0813">Transport</keyword>
<name>BRNQ_LACDL</name>
<accession>P54104</accession>
<organism>
    <name type="scientific">Lactobacillus delbrueckii subsp. lactis</name>
    <dbReference type="NCBI Taxonomy" id="29397"/>
    <lineage>
        <taxon>Bacteria</taxon>
        <taxon>Bacillati</taxon>
        <taxon>Bacillota</taxon>
        <taxon>Bacilli</taxon>
        <taxon>Lactobacillales</taxon>
        <taxon>Lactobacillaceae</taxon>
        <taxon>Lactobacillus</taxon>
    </lineage>
</organism>
<reference key="1">
    <citation type="journal article" date="1995" name="Mol. Gen. Genet.">
        <title>Cloning and characterization of brnQ, a gene encoding a low-affinity, branched-chain amino acid carrier in Lactobacillus delbruckii subsp. lactis DSM7290.</title>
        <authorList>
            <person name="Stucky K."/>
            <person name="Hagting A."/>
            <person name="Klein J.R."/>
            <person name="Matern H."/>
            <person name="Henrich B."/>
            <person name="Konings W.N."/>
            <person name="Plapp R."/>
        </authorList>
    </citation>
    <scope>NUCLEOTIDE SEQUENCE [GENOMIC DNA]</scope>
    <scope>FUNCTION AS A TRANSPORTER</scope>
    <scope>ACTIVITY REGULATION</scope>
    <source>
        <strain>DSM 7290</strain>
    </source>
</reference>
<gene>
    <name evidence="3" type="primary">brnQ</name>
</gene>
<dbReference type="EMBL" id="Z48676">
    <property type="protein sequence ID" value="CAA88595.1"/>
    <property type="molecule type" value="Genomic_DNA"/>
</dbReference>
<dbReference type="PIR" id="S60180">
    <property type="entry name" value="S60180"/>
</dbReference>
<dbReference type="TCDB" id="2.A.26.1.3">
    <property type="family name" value="the branched chain amino acid:cation symporter (livcs) family"/>
</dbReference>
<dbReference type="GO" id="GO:0005886">
    <property type="term" value="C:plasma membrane"/>
    <property type="evidence" value="ECO:0007669"/>
    <property type="project" value="UniProtKB-SubCell"/>
</dbReference>
<dbReference type="GO" id="GO:0015188">
    <property type="term" value="F:L-isoleucine transmembrane transporter activity"/>
    <property type="evidence" value="ECO:0007669"/>
    <property type="project" value="TreeGrafter"/>
</dbReference>
<dbReference type="GO" id="GO:0015190">
    <property type="term" value="F:L-leucine transmembrane transporter activity"/>
    <property type="evidence" value="ECO:0007669"/>
    <property type="project" value="TreeGrafter"/>
</dbReference>
<dbReference type="GO" id="GO:0005304">
    <property type="term" value="F:L-valine transmembrane transporter activity"/>
    <property type="evidence" value="ECO:0007669"/>
    <property type="project" value="TreeGrafter"/>
</dbReference>
<dbReference type="GO" id="GO:0015818">
    <property type="term" value="P:isoleucine transport"/>
    <property type="evidence" value="ECO:0007669"/>
    <property type="project" value="TreeGrafter"/>
</dbReference>
<dbReference type="GO" id="GO:0015820">
    <property type="term" value="P:L-leucine transport"/>
    <property type="evidence" value="ECO:0007669"/>
    <property type="project" value="TreeGrafter"/>
</dbReference>
<dbReference type="Gene3D" id="1.10.4160.10">
    <property type="entry name" value="Hydantoin permease"/>
    <property type="match status" value="1"/>
</dbReference>
<dbReference type="InterPro" id="IPR004685">
    <property type="entry name" value="Brnchd-chn_aa_trnsp_Livcs"/>
</dbReference>
<dbReference type="NCBIfam" id="TIGR00796">
    <property type="entry name" value="livcs"/>
    <property type="match status" value="1"/>
</dbReference>
<dbReference type="PANTHER" id="PTHR30588:SF0">
    <property type="entry name" value="BRANCHED-CHAIN AMINO ACID PERMEASE BRNQ"/>
    <property type="match status" value="1"/>
</dbReference>
<dbReference type="PANTHER" id="PTHR30588">
    <property type="entry name" value="BRANCHED-CHAIN AMINO ACID TRANSPORT SYSTEM 2 CARRIER PROTEIN"/>
    <property type="match status" value="1"/>
</dbReference>
<dbReference type="Pfam" id="PF05525">
    <property type="entry name" value="Branch_AA_trans"/>
    <property type="match status" value="1"/>
</dbReference>
<evidence type="ECO:0000255" key="1"/>
<evidence type="ECO:0000269" key="2">
    <source>
    </source>
</evidence>
<evidence type="ECO:0000303" key="3">
    <source>
    </source>
</evidence>
<evidence type="ECO:0000305" key="4"/>
<proteinExistence type="evidence at protein level"/>
<sequence length="446" mass="47869">MKEKLTHAESLTISSMLFGLFFGAGNLIFPAYLGEASGANLWISLLGFLITGVGLPLLAIASLGMTRSEGLLDLSGRVSHKYSYFFTCLLYLTIGPFFAIPRSFTVPFETGISALLPSGMAKSTGLFIFSLIFFAIMLFFSLRPGQIMDWIGKFLTPAFLLFFFFIMIMALLHPLGNYHAVKPVGEYASAPLISGVLAGYNTMDALAGLAFGIIVISSIRTFGVTKPEKVASATLKTGVLTCLLMAVIYAITALVGAQSRTALGLAANGGEALSQIARHYFPGLGAVIFALMIFVACLKTAIGLITACSETFAEMFPKTLSYNMWAIIFSLLAFGIANVGLTTIISFSLPVLMLLYPLAISLILLALTSKLFDFKQVDYQIMTAVTFLCALGDFFKALPAGMQVKAVTGLYGHVLPLYQDGLGWLVPVTVIFAILAIKGVISKKRA</sequence>
<feature type="chain" id="PRO_0000099773" description="Branched-chain amino acid permease BrnQ">
    <location>
        <begin position="1"/>
        <end position="446"/>
    </location>
</feature>
<feature type="transmembrane region" description="Helical" evidence="1">
    <location>
        <begin position="13"/>
        <end position="33"/>
    </location>
</feature>
<feature type="transmembrane region" description="Helical" evidence="1">
    <location>
        <begin position="41"/>
        <end position="61"/>
    </location>
</feature>
<feature type="transmembrane region" description="Helical" evidence="1">
    <location>
        <begin position="81"/>
        <end position="101"/>
    </location>
</feature>
<feature type="transmembrane region" description="Helical" evidence="1">
    <location>
        <begin position="120"/>
        <end position="140"/>
    </location>
</feature>
<feature type="transmembrane region" description="Helical" evidence="1">
    <location>
        <begin position="154"/>
        <end position="174"/>
    </location>
</feature>
<feature type="transmembrane region" description="Helical" evidence="1">
    <location>
        <begin position="196"/>
        <end position="216"/>
    </location>
</feature>
<feature type="transmembrane region" description="Helical" evidence="1">
    <location>
        <begin position="237"/>
        <end position="257"/>
    </location>
</feature>
<feature type="transmembrane region" description="Helical" evidence="1">
    <location>
        <begin position="285"/>
        <end position="305"/>
    </location>
</feature>
<feature type="transmembrane region" description="Helical" evidence="1">
    <location>
        <begin position="325"/>
        <end position="345"/>
    </location>
</feature>
<feature type="transmembrane region" description="Helical" evidence="1">
    <location>
        <begin position="347"/>
        <end position="367"/>
    </location>
</feature>
<feature type="transmembrane region" description="Helical" evidence="1">
    <location>
        <begin position="381"/>
        <end position="401"/>
    </location>
</feature>
<feature type="transmembrane region" description="Helical" evidence="1">
    <location>
        <begin position="421"/>
        <end position="441"/>
    </location>
</feature>
<protein>
    <recommendedName>
        <fullName evidence="4">Branched-chain amino acid permease BrnQ</fullName>
        <shortName evidence="4">BCAA permease</shortName>
    </recommendedName>
    <alternativeName>
        <fullName>Branched-chain amino acid transport system carrier protein</fullName>
    </alternativeName>
    <alternativeName>
        <fullName>Branched-chain amino acid uptake carrier</fullName>
    </alternativeName>
</protein>
<comment type="function">
    <text evidence="2">Branched chain amino acid transport system which is involved in the uptake of leucine, valine and isoleucine (PubMed:8544834). The proton motive force is probably the driving force for transport (PubMed:8544834).</text>
</comment>
<comment type="activity regulation">
    <text evidence="2">Leucine uptake is inhibited by the proton ionophore carbonyl cyanide m-chlorophenylhydrazone (CCCP).</text>
</comment>
<comment type="subcellular location">
    <subcellularLocation>
        <location evidence="4">Cell membrane</location>
        <topology evidence="1">Multi-pass membrane protein</topology>
    </subcellularLocation>
</comment>
<comment type="similarity">
    <text evidence="4">Belongs to the branched chain amino acid transporter family.</text>
</comment>